<evidence type="ECO:0000255" key="1"/>
<evidence type="ECO:0000255" key="2">
    <source>
        <dbReference type="PROSITE-ProRule" id="PRU00368"/>
    </source>
</evidence>
<evidence type="ECO:0000256" key="3">
    <source>
        <dbReference type="SAM" id="MobiDB-lite"/>
    </source>
</evidence>
<evidence type="ECO:0000269" key="4">
    <source>
    </source>
</evidence>
<evidence type="ECO:0000269" key="5">
    <source>
    </source>
</evidence>
<evidence type="ECO:0000269" key="6">
    <source>
    </source>
</evidence>
<evidence type="ECO:0000305" key="7"/>
<gene>
    <name type="primary">C1QTNF6</name>
    <name type="synonym">CTRP6</name>
    <name type="ORF">UNQ581/PRO1151</name>
</gene>
<keyword id="KW-0025">Alternative splicing</keyword>
<keyword id="KW-0176">Collagen</keyword>
<keyword id="KW-0903">Direct protein sequencing</keyword>
<keyword id="KW-0325">Glycoprotein</keyword>
<keyword id="KW-1267">Proteomics identification</keyword>
<keyword id="KW-1185">Reference proteome</keyword>
<keyword id="KW-0964">Secreted</keyword>
<keyword id="KW-0732">Signal</keyword>
<feature type="signal peptide" evidence="5">
    <location>
        <begin position="1"/>
        <end position="46"/>
    </location>
</feature>
<feature type="chain" id="PRO_0000003538" description="Complement C1q tumor necrosis factor-related protein 6">
    <location>
        <begin position="47"/>
        <end position="278"/>
    </location>
</feature>
<feature type="domain" description="Collagen-like">
    <location>
        <begin position="97"/>
        <end position="138"/>
    </location>
</feature>
<feature type="domain" description="C1q" evidence="2">
    <location>
        <begin position="139"/>
        <end position="259"/>
    </location>
</feature>
<feature type="region of interest" description="Disordered" evidence="3">
    <location>
        <begin position="99"/>
        <end position="135"/>
    </location>
</feature>
<feature type="glycosylation site" description="N-linked (GlcNAc...) asparagine" evidence="1">
    <location>
        <position position="91"/>
    </location>
</feature>
<feature type="splice variant" id="VSP_059765" description="In isoform 3.">
    <original>MQWLRVRESPGEATGHRVTMGTAALGPVWAALLLFLLMCEIPMVELTFDRAVASGCQRCCDSEDPLDPAHVSSASSSGRPHALPEIRPYINITILKGDKGDPGPMGLPGYMGREGPQGEPGPQGSKGDKGEMGSPGAPCQKRFFAFS</original>
    <variation>MSVGTSLEQAQMSTLTCPLFIPT</variation>
    <location>
        <begin position="1"/>
        <end position="147"/>
    </location>
</feature>
<feature type="splice variant" id="VSP_059766" description="In isoform 2.">
    <location>
        <begin position="1"/>
        <end position="19"/>
    </location>
</feature>
<feature type="sequence variant" id="VAR_046624" description="In dbSNP:rs229527." evidence="4 6">
    <original>G</original>
    <variation>V</variation>
    <location>
        <position position="21"/>
    </location>
</feature>
<feature type="sequence variant" id="VAR_046625" description="In dbSNP:rs229526." evidence="4">
    <original>P</original>
    <variation>R</variation>
    <location>
        <position position="42"/>
    </location>
</feature>
<feature type="sequence variant" id="VAR_046626" description="In dbSNP:rs7290488.">
    <original>G</original>
    <variation>D</variation>
    <location>
        <position position="55"/>
    </location>
</feature>
<feature type="sequence variant" id="VAR_046627" description="In dbSNP:rs17812699.">
    <original>P</original>
    <variation>L</variation>
    <location>
        <position position="138"/>
    </location>
</feature>
<feature type="sequence variant" id="VAR_046628" description="In dbSNP:rs17812681.">
    <original>R</original>
    <variation>H</variation>
    <location>
        <position position="226"/>
    </location>
</feature>
<sequence>MQWLRVRESPGEATGHRVTMGTAALGPVWAALLLFLLMCEIPMVELTFDRAVASGCQRCCDSEDPLDPAHVSSASSSGRPHALPEIRPYINITILKGDKGDPGPMGLPGYMGREGPQGEPGPQGSKGDKGEMGSPGAPCQKRFFAFSVGRKTALHSGEDFQTLLFERVFVNLDGCFDMATGQFAAPLRGIYFFSLNVHSWNYKETYVHIMHNQKEAVILYAQPSERSIMQSQSVMLDLAYGDRVWVRLFKRQRENAIYSNDFDTYITFSGHLIKAEDD</sequence>
<accession>Q9BXI9</accession>
<accession>Q5H9G8</accession>
<accession>Q6ZRM7</accession>
<dbReference type="EMBL" id="AF329842">
    <property type="protein sequence ID" value="AAK17966.1"/>
    <property type="molecule type" value="mRNA"/>
</dbReference>
<dbReference type="EMBL" id="AY358374">
    <property type="protein sequence ID" value="AAQ88740.1"/>
    <property type="molecule type" value="mRNA"/>
</dbReference>
<dbReference type="EMBL" id="AK128125">
    <property type="protein sequence ID" value="BAC87283.1"/>
    <property type="molecule type" value="mRNA"/>
</dbReference>
<dbReference type="EMBL" id="Z82188">
    <property type="status" value="NOT_ANNOTATED_CDS"/>
    <property type="molecule type" value="Genomic_DNA"/>
</dbReference>
<dbReference type="EMBL" id="CH471095">
    <property type="protein sequence ID" value="EAW60145.1"/>
    <property type="molecule type" value="Genomic_DNA"/>
</dbReference>
<dbReference type="EMBL" id="BC020551">
    <property type="protein sequence ID" value="AAH20551.1"/>
    <property type="molecule type" value="mRNA"/>
</dbReference>
<dbReference type="CCDS" id="CCDS13943.1">
    <molecule id="Q9BXI9-2"/>
</dbReference>
<dbReference type="RefSeq" id="NP_001352807.1">
    <molecule id="Q9BXI9-1"/>
    <property type="nucleotide sequence ID" value="NM_001365878.1"/>
</dbReference>
<dbReference type="RefSeq" id="NP_114116.3">
    <molecule id="Q9BXI9-2"/>
    <property type="nucleotide sequence ID" value="NM_031910.3"/>
</dbReference>
<dbReference type="RefSeq" id="NP_872292.1">
    <molecule id="Q9BXI9-2"/>
    <property type="nucleotide sequence ID" value="NM_182486.2"/>
</dbReference>
<dbReference type="RefSeq" id="XP_011528159.1">
    <molecule id="Q9BXI9-1"/>
    <property type="nucleotide sequence ID" value="XM_011529857.3"/>
</dbReference>
<dbReference type="RefSeq" id="XP_016884059.1">
    <property type="nucleotide sequence ID" value="XM_017028570.1"/>
</dbReference>
<dbReference type="RefSeq" id="XP_016884060.1">
    <property type="nucleotide sequence ID" value="XM_017028571.1"/>
</dbReference>
<dbReference type="RefSeq" id="XP_016884061.1">
    <property type="nucleotide sequence ID" value="XM_017028572.1"/>
</dbReference>
<dbReference type="RefSeq" id="XP_016884062.1">
    <property type="nucleotide sequence ID" value="XM_017028573.1"/>
</dbReference>
<dbReference type="RefSeq" id="XP_016884063.1">
    <property type="nucleotide sequence ID" value="XM_017028574.1"/>
</dbReference>
<dbReference type="RefSeq" id="XP_047297068.1">
    <molecule id="Q9BXI9-2"/>
    <property type="nucleotide sequence ID" value="XM_047441112.1"/>
</dbReference>
<dbReference type="SMR" id="Q9BXI9"/>
<dbReference type="BioGRID" id="125393">
    <property type="interactions" value="18"/>
</dbReference>
<dbReference type="FunCoup" id="Q9BXI9">
    <property type="interactions" value="343"/>
</dbReference>
<dbReference type="IntAct" id="Q9BXI9">
    <property type="interactions" value="16"/>
</dbReference>
<dbReference type="STRING" id="9606.ENSP00000338812"/>
<dbReference type="GlyCosmos" id="Q9BXI9">
    <property type="glycosylation" value="1 site, No reported glycans"/>
</dbReference>
<dbReference type="GlyGen" id="Q9BXI9">
    <property type="glycosylation" value="1 site, 1 N-linked glycan (1 site)"/>
</dbReference>
<dbReference type="iPTMnet" id="Q9BXI9"/>
<dbReference type="PhosphoSitePlus" id="Q9BXI9"/>
<dbReference type="BioMuta" id="C1QTNF6"/>
<dbReference type="DMDM" id="206729927"/>
<dbReference type="jPOST" id="Q9BXI9"/>
<dbReference type="MassIVE" id="Q9BXI9"/>
<dbReference type="PaxDb" id="9606-ENSP00000338812"/>
<dbReference type="PeptideAtlas" id="Q9BXI9"/>
<dbReference type="ProteomicsDB" id="79429">
    <molecule id="Q9BXI9-1"/>
</dbReference>
<dbReference type="ProteomicsDB" id="79430">
    <molecule id="Q9BXI9-2"/>
</dbReference>
<dbReference type="ProteomicsDB" id="79431">
    <molecule id="Q9BXI9-3"/>
</dbReference>
<dbReference type="Pumba" id="Q9BXI9"/>
<dbReference type="Antibodypedia" id="1088">
    <property type="antibodies" value="273 antibodies from 31 providers"/>
</dbReference>
<dbReference type="DNASU" id="114904"/>
<dbReference type="Ensembl" id="ENST00000337843.7">
    <molecule id="Q9BXI9-2"/>
    <property type="protein sequence ID" value="ENSP00000338812.2"/>
    <property type="gene ID" value="ENSG00000133466.14"/>
</dbReference>
<dbReference type="Ensembl" id="ENST00000397110.6">
    <molecule id="Q9BXI9-2"/>
    <property type="protein sequence ID" value="ENSP00000380299.2"/>
    <property type="gene ID" value="ENSG00000133466.14"/>
</dbReference>
<dbReference type="GeneID" id="114904"/>
<dbReference type="KEGG" id="hsa:114904"/>
<dbReference type="MANE-Select" id="ENST00000337843.7">
    <property type="protein sequence ID" value="ENSP00000338812.2"/>
    <property type="RefSeq nucleotide sequence ID" value="NM_031910.4"/>
    <property type="RefSeq protein sequence ID" value="NP_114116.3"/>
</dbReference>
<dbReference type="UCSC" id="uc003aqx.2">
    <molecule id="Q9BXI9-2"/>
    <property type="organism name" value="human"/>
</dbReference>
<dbReference type="AGR" id="HGNC:14343"/>
<dbReference type="CTD" id="114904"/>
<dbReference type="DisGeNET" id="114904"/>
<dbReference type="GeneCards" id="C1QTNF6"/>
<dbReference type="HGNC" id="HGNC:14343">
    <property type="gene designation" value="C1QTNF6"/>
</dbReference>
<dbReference type="HPA" id="ENSG00000133466">
    <property type="expression patterns" value="Tissue enhanced (endometrium, placenta)"/>
</dbReference>
<dbReference type="MIM" id="614910">
    <property type="type" value="gene"/>
</dbReference>
<dbReference type="neXtProt" id="NX_Q9BXI9"/>
<dbReference type="OpenTargets" id="ENSG00000133466"/>
<dbReference type="PharmGKB" id="PA25633"/>
<dbReference type="VEuPathDB" id="HostDB:ENSG00000133466"/>
<dbReference type="eggNOG" id="ENOG502QT5D">
    <property type="taxonomic scope" value="Eukaryota"/>
</dbReference>
<dbReference type="GeneTree" id="ENSGT00940000160396"/>
<dbReference type="HOGENOM" id="CLU_001074_3_0_1"/>
<dbReference type="InParanoid" id="Q9BXI9"/>
<dbReference type="OMA" id="GPCQTRF"/>
<dbReference type="OrthoDB" id="6138508at2759"/>
<dbReference type="PAN-GO" id="Q9BXI9">
    <property type="GO annotations" value="1 GO annotation based on evolutionary models"/>
</dbReference>
<dbReference type="PhylomeDB" id="Q9BXI9"/>
<dbReference type="TreeFam" id="TF329591"/>
<dbReference type="PathwayCommons" id="Q9BXI9"/>
<dbReference type="SignaLink" id="Q9BXI9"/>
<dbReference type="BioGRID-ORCS" id="114904">
    <property type="hits" value="14 hits in 1149 CRISPR screens"/>
</dbReference>
<dbReference type="ChiTaRS" id="C1QTNF6">
    <property type="organism name" value="human"/>
</dbReference>
<dbReference type="GenomeRNAi" id="114904"/>
<dbReference type="Pharos" id="Q9BXI9">
    <property type="development level" value="Tbio"/>
</dbReference>
<dbReference type="PRO" id="PR:Q9BXI9"/>
<dbReference type="Proteomes" id="UP000005640">
    <property type="component" value="Chromosome 22"/>
</dbReference>
<dbReference type="RNAct" id="Q9BXI9">
    <property type="molecule type" value="protein"/>
</dbReference>
<dbReference type="Bgee" id="ENSG00000133466">
    <property type="expression patterns" value="Expressed in decidua and 103 other cell types or tissues"/>
</dbReference>
<dbReference type="ExpressionAtlas" id="Q9BXI9">
    <property type="expression patterns" value="baseline and differential"/>
</dbReference>
<dbReference type="GO" id="GO:0005581">
    <property type="term" value="C:collagen trimer"/>
    <property type="evidence" value="ECO:0007669"/>
    <property type="project" value="UniProtKB-KW"/>
</dbReference>
<dbReference type="GO" id="GO:0005615">
    <property type="term" value="C:extracellular space"/>
    <property type="evidence" value="ECO:0000318"/>
    <property type="project" value="GO_Central"/>
</dbReference>
<dbReference type="GO" id="GO:0042802">
    <property type="term" value="F:identical protein binding"/>
    <property type="evidence" value="ECO:0000353"/>
    <property type="project" value="IntAct"/>
</dbReference>
<dbReference type="FunFam" id="2.60.120.40:FF:000029">
    <property type="entry name" value="Complement C1q tumor necrosis factor-related protein 1"/>
    <property type="match status" value="1"/>
</dbReference>
<dbReference type="Gene3D" id="2.60.120.40">
    <property type="match status" value="1"/>
</dbReference>
<dbReference type="InterPro" id="IPR001073">
    <property type="entry name" value="C1q_dom"/>
</dbReference>
<dbReference type="InterPro" id="IPR050822">
    <property type="entry name" value="Cerebellin_Synaptic_Org"/>
</dbReference>
<dbReference type="InterPro" id="IPR008160">
    <property type="entry name" value="Collagen"/>
</dbReference>
<dbReference type="InterPro" id="IPR008983">
    <property type="entry name" value="Tumour_necrosis_fac-like_dom"/>
</dbReference>
<dbReference type="PANTHER" id="PTHR22923">
    <property type="entry name" value="CEREBELLIN-RELATED"/>
    <property type="match status" value="1"/>
</dbReference>
<dbReference type="PANTHER" id="PTHR22923:SF70">
    <property type="entry name" value="COMPLEMENT C1Q TUMOR NECROSIS FACTOR-RELATED PROTEIN 6"/>
    <property type="match status" value="1"/>
</dbReference>
<dbReference type="Pfam" id="PF00386">
    <property type="entry name" value="C1q"/>
    <property type="match status" value="1"/>
</dbReference>
<dbReference type="Pfam" id="PF01391">
    <property type="entry name" value="Collagen"/>
    <property type="match status" value="1"/>
</dbReference>
<dbReference type="PRINTS" id="PR00007">
    <property type="entry name" value="COMPLEMNTC1Q"/>
</dbReference>
<dbReference type="SMART" id="SM00110">
    <property type="entry name" value="C1Q"/>
    <property type="match status" value="1"/>
</dbReference>
<dbReference type="SUPFAM" id="SSF49842">
    <property type="entry name" value="TNF-like"/>
    <property type="match status" value="1"/>
</dbReference>
<dbReference type="PROSITE" id="PS50871">
    <property type="entry name" value="C1Q"/>
    <property type="match status" value="1"/>
</dbReference>
<proteinExistence type="evidence at protein level"/>
<comment type="interaction">
    <interactant intactId="EBI-10301084">
        <id>Q9BXI9</id>
    </interactant>
    <interactant intactId="EBI-11536642">
        <id>Q9BXJ1-2</id>
        <label>C1QTNF1</label>
    </interactant>
    <organismsDiffer>false</organismsDiffer>
    <experiments>3</experiments>
</comment>
<comment type="interaction">
    <interactant intactId="EBI-10301084">
        <id>Q9BXI9</id>
    </interactant>
    <interactant intactId="EBI-347996">
        <id>O43765</id>
        <label>SGTA</label>
    </interactant>
    <organismsDiffer>false</organismsDiffer>
    <experiments>9</experiments>
</comment>
<comment type="interaction">
    <interactant intactId="EBI-10301084">
        <id>Q9BXI9</id>
    </interactant>
    <interactant intactId="EBI-744081">
        <id>Q96EQ0</id>
        <label>SGTB</label>
    </interactant>
    <organismsDiffer>false</organismsDiffer>
    <experiments>3</experiments>
</comment>
<comment type="interaction">
    <interactant intactId="EBI-10301084">
        <id>Q9BXI9</id>
    </interactant>
    <interactant intactId="EBI-25475920">
        <id>PRO_0000449631</id>
        <label>rep</label>
        <dbReference type="UniProtKB" id="P0DTD1"/>
    </interactant>
    <organismsDiffer>true</organismsDiffer>
    <experiments>4</experiments>
</comment>
<comment type="interaction">
    <interactant intactId="EBI-27104631">
        <id>Q9BXI9-2</id>
    </interactant>
    <interactant intactId="EBI-27104631">
        <id>Q9BXI9-2</id>
        <label>C1QTNF6</label>
    </interactant>
    <organismsDiffer>false</organismsDiffer>
    <experiments>2</experiments>
</comment>
<comment type="interaction">
    <interactant intactId="EBI-27104631">
        <id>Q9BXI9-2</id>
    </interactant>
    <interactant intactId="EBI-27104870">
        <id>Q9BWP8-1</id>
        <label>COLEC11</label>
    </interactant>
    <organismsDiffer>false</organismsDiffer>
    <experiments>3</experiments>
</comment>
<comment type="interaction">
    <interactant intactId="EBI-27104631">
        <id>Q9BXI9-2</id>
    </interactant>
    <interactant intactId="EBI-2296927">
        <id>P02769</id>
        <label>ALB</label>
    </interactant>
    <organismsDiffer>true</organismsDiffer>
    <experiments>4</experiments>
</comment>
<comment type="subcellular location">
    <subcellularLocation>
        <location evidence="7">Secreted</location>
    </subcellularLocation>
</comment>
<comment type="alternative products">
    <event type="alternative splicing"/>
    <isoform>
        <id>Q9BXI9-2</id>
        <name>1</name>
        <sequence type="displayed"/>
    </isoform>
    <isoform>
        <id>Q9BXI9-1</id>
        <name>2</name>
        <sequence type="described" ref="VSP_059766"/>
    </isoform>
    <isoform>
        <id>Q9BXI9-3</id>
        <name>3</name>
        <sequence type="described" ref="VSP_059765"/>
    </isoform>
</comment>
<reference key="1">
    <citation type="submission" date="2000-12" db="EMBL/GenBank/DDBJ databases">
        <title>Homo sapiens complement-c1q tumor necrosis factor-related protein.</title>
        <authorList>
            <person name="Piddington C.S."/>
            <person name="Sheppard P.O."/>
        </authorList>
    </citation>
    <scope>NUCLEOTIDE SEQUENCE [MRNA] (ISOFORM 1)</scope>
</reference>
<reference key="2">
    <citation type="journal article" date="2003" name="Genome Res.">
        <title>The secreted protein discovery initiative (SPDI), a large-scale effort to identify novel human secreted and transmembrane proteins: a bioinformatics assessment.</title>
        <authorList>
            <person name="Clark H.F."/>
            <person name="Gurney A.L."/>
            <person name="Abaya E."/>
            <person name="Baker K."/>
            <person name="Baldwin D.T."/>
            <person name="Brush J."/>
            <person name="Chen J."/>
            <person name="Chow B."/>
            <person name="Chui C."/>
            <person name="Crowley C."/>
            <person name="Currell B."/>
            <person name="Deuel B."/>
            <person name="Dowd P."/>
            <person name="Eaton D."/>
            <person name="Foster J.S."/>
            <person name="Grimaldi C."/>
            <person name="Gu Q."/>
            <person name="Hass P.E."/>
            <person name="Heldens S."/>
            <person name="Huang A."/>
            <person name="Kim H.S."/>
            <person name="Klimowski L."/>
            <person name="Jin Y."/>
            <person name="Johnson S."/>
            <person name="Lee J."/>
            <person name="Lewis L."/>
            <person name="Liao D."/>
            <person name="Mark M.R."/>
            <person name="Robbie E."/>
            <person name="Sanchez C."/>
            <person name="Schoenfeld J."/>
            <person name="Seshagiri S."/>
            <person name="Simmons L."/>
            <person name="Singh J."/>
            <person name="Smith V."/>
            <person name="Stinson J."/>
            <person name="Vagts A."/>
            <person name="Vandlen R.L."/>
            <person name="Watanabe C."/>
            <person name="Wieand D."/>
            <person name="Woods K."/>
            <person name="Xie M.-H."/>
            <person name="Yansura D.G."/>
            <person name="Yi S."/>
            <person name="Yu G."/>
            <person name="Yuan J."/>
            <person name="Zhang M."/>
            <person name="Zhang Z."/>
            <person name="Goddard A.D."/>
            <person name="Wood W.I."/>
            <person name="Godowski P.J."/>
            <person name="Gray A.M."/>
        </authorList>
    </citation>
    <scope>NUCLEOTIDE SEQUENCE [LARGE SCALE MRNA] (ISOFORM 2)</scope>
    <scope>VARIANTS VAL-21 AND ARG-42</scope>
</reference>
<reference key="3">
    <citation type="journal article" date="2004" name="Nat. Genet.">
        <title>Complete sequencing and characterization of 21,243 full-length human cDNAs.</title>
        <authorList>
            <person name="Ota T."/>
            <person name="Suzuki Y."/>
            <person name="Nishikawa T."/>
            <person name="Otsuki T."/>
            <person name="Sugiyama T."/>
            <person name="Irie R."/>
            <person name="Wakamatsu A."/>
            <person name="Hayashi K."/>
            <person name="Sato H."/>
            <person name="Nagai K."/>
            <person name="Kimura K."/>
            <person name="Makita H."/>
            <person name="Sekine M."/>
            <person name="Obayashi M."/>
            <person name="Nishi T."/>
            <person name="Shibahara T."/>
            <person name="Tanaka T."/>
            <person name="Ishii S."/>
            <person name="Yamamoto J."/>
            <person name="Saito K."/>
            <person name="Kawai Y."/>
            <person name="Isono Y."/>
            <person name="Nakamura Y."/>
            <person name="Nagahari K."/>
            <person name="Murakami K."/>
            <person name="Yasuda T."/>
            <person name="Iwayanagi T."/>
            <person name="Wagatsuma M."/>
            <person name="Shiratori A."/>
            <person name="Sudo H."/>
            <person name="Hosoiri T."/>
            <person name="Kaku Y."/>
            <person name="Kodaira H."/>
            <person name="Kondo H."/>
            <person name="Sugawara M."/>
            <person name="Takahashi M."/>
            <person name="Kanda K."/>
            <person name="Yokoi T."/>
            <person name="Furuya T."/>
            <person name="Kikkawa E."/>
            <person name="Omura Y."/>
            <person name="Abe K."/>
            <person name="Kamihara K."/>
            <person name="Katsuta N."/>
            <person name="Sato K."/>
            <person name="Tanikawa M."/>
            <person name="Yamazaki M."/>
            <person name="Ninomiya K."/>
            <person name="Ishibashi T."/>
            <person name="Yamashita H."/>
            <person name="Murakawa K."/>
            <person name="Fujimori K."/>
            <person name="Tanai H."/>
            <person name="Kimata M."/>
            <person name="Watanabe M."/>
            <person name="Hiraoka S."/>
            <person name="Chiba Y."/>
            <person name="Ishida S."/>
            <person name="Ono Y."/>
            <person name="Takiguchi S."/>
            <person name="Watanabe S."/>
            <person name="Yosida M."/>
            <person name="Hotuta T."/>
            <person name="Kusano J."/>
            <person name="Kanehori K."/>
            <person name="Takahashi-Fujii A."/>
            <person name="Hara H."/>
            <person name="Tanase T.-O."/>
            <person name="Nomura Y."/>
            <person name="Togiya S."/>
            <person name="Komai F."/>
            <person name="Hara R."/>
            <person name="Takeuchi K."/>
            <person name="Arita M."/>
            <person name="Imose N."/>
            <person name="Musashino K."/>
            <person name="Yuuki H."/>
            <person name="Oshima A."/>
            <person name="Sasaki N."/>
            <person name="Aotsuka S."/>
            <person name="Yoshikawa Y."/>
            <person name="Matsunawa H."/>
            <person name="Ichihara T."/>
            <person name="Shiohata N."/>
            <person name="Sano S."/>
            <person name="Moriya S."/>
            <person name="Momiyama H."/>
            <person name="Satoh N."/>
            <person name="Takami S."/>
            <person name="Terashima Y."/>
            <person name="Suzuki O."/>
            <person name="Nakagawa S."/>
            <person name="Senoh A."/>
            <person name="Mizoguchi H."/>
            <person name="Goto Y."/>
            <person name="Shimizu F."/>
            <person name="Wakebe H."/>
            <person name="Hishigaki H."/>
            <person name="Watanabe T."/>
            <person name="Sugiyama A."/>
            <person name="Takemoto M."/>
            <person name="Kawakami B."/>
            <person name="Yamazaki M."/>
            <person name="Watanabe K."/>
            <person name="Kumagai A."/>
            <person name="Itakura S."/>
            <person name="Fukuzumi Y."/>
            <person name="Fujimori Y."/>
            <person name="Komiyama M."/>
            <person name="Tashiro H."/>
            <person name="Tanigami A."/>
            <person name="Fujiwara T."/>
            <person name="Ono T."/>
            <person name="Yamada K."/>
            <person name="Fujii Y."/>
            <person name="Ozaki K."/>
            <person name="Hirao M."/>
            <person name="Ohmori Y."/>
            <person name="Kawabata A."/>
            <person name="Hikiji T."/>
            <person name="Kobatake N."/>
            <person name="Inagaki H."/>
            <person name="Ikema Y."/>
            <person name="Okamoto S."/>
            <person name="Okitani R."/>
            <person name="Kawakami T."/>
            <person name="Noguchi S."/>
            <person name="Itoh T."/>
            <person name="Shigeta K."/>
            <person name="Senba T."/>
            <person name="Matsumura K."/>
            <person name="Nakajima Y."/>
            <person name="Mizuno T."/>
            <person name="Morinaga M."/>
            <person name="Sasaki M."/>
            <person name="Togashi T."/>
            <person name="Oyama M."/>
            <person name="Hata H."/>
            <person name="Watanabe M."/>
            <person name="Komatsu T."/>
            <person name="Mizushima-Sugano J."/>
            <person name="Satoh T."/>
            <person name="Shirai Y."/>
            <person name="Takahashi Y."/>
            <person name="Nakagawa K."/>
            <person name="Okumura K."/>
            <person name="Nagase T."/>
            <person name="Nomura N."/>
            <person name="Kikuchi H."/>
            <person name="Masuho Y."/>
            <person name="Yamashita R."/>
            <person name="Nakai K."/>
            <person name="Yada T."/>
            <person name="Nakamura Y."/>
            <person name="Ohara O."/>
            <person name="Isogai T."/>
            <person name="Sugano S."/>
        </authorList>
    </citation>
    <scope>NUCLEOTIDE SEQUENCE [LARGE SCALE MRNA] (ISOFORM 3)</scope>
    <source>
        <tissue>Testis</tissue>
    </source>
</reference>
<reference key="4">
    <citation type="journal article" date="1999" name="Nature">
        <title>The DNA sequence of human chromosome 22.</title>
        <authorList>
            <person name="Dunham I."/>
            <person name="Hunt A.R."/>
            <person name="Collins J.E."/>
            <person name="Bruskiewich R."/>
            <person name="Beare D.M."/>
            <person name="Clamp M."/>
            <person name="Smink L.J."/>
            <person name="Ainscough R."/>
            <person name="Almeida J.P."/>
            <person name="Babbage A.K."/>
            <person name="Bagguley C."/>
            <person name="Bailey J."/>
            <person name="Barlow K.F."/>
            <person name="Bates K.N."/>
            <person name="Beasley O.P."/>
            <person name="Bird C.P."/>
            <person name="Blakey S.E."/>
            <person name="Bridgeman A.M."/>
            <person name="Buck D."/>
            <person name="Burgess J."/>
            <person name="Burrill W.D."/>
            <person name="Burton J."/>
            <person name="Carder C."/>
            <person name="Carter N.P."/>
            <person name="Chen Y."/>
            <person name="Clark G."/>
            <person name="Clegg S.M."/>
            <person name="Cobley V.E."/>
            <person name="Cole C.G."/>
            <person name="Collier R.E."/>
            <person name="Connor R."/>
            <person name="Conroy D."/>
            <person name="Corby N.R."/>
            <person name="Coville G.J."/>
            <person name="Cox A.V."/>
            <person name="Davis J."/>
            <person name="Dawson E."/>
            <person name="Dhami P.D."/>
            <person name="Dockree C."/>
            <person name="Dodsworth S.J."/>
            <person name="Durbin R.M."/>
            <person name="Ellington A.G."/>
            <person name="Evans K.L."/>
            <person name="Fey J.M."/>
            <person name="Fleming K."/>
            <person name="French L."/>
            <person name="Garner A.A."/>
            <person name="Gilbert J.G.R."/>
            <person name="Goward M.E."/>
            <person name="Grafham D.V."/>
            <person name="Griffiths M.N.D."/>
            <person name="Hall C."/>
            <person name="Hall R.E."/>
            <person name="Hall-Tamlyn G."/>
            <person name="Heathcott R.W."/>
            <person name="Ho S."/>
            <person name="Holmes S."/>
            <person name="Hunt S.E."/>
            <person name="Jones M.C."/>
            <person name="Kershaw J."/>
            <person name="Kimberley A.M."/>
            <person name="King A."/>
            <person name="Laird G.K."/>
            <person name="Langford C.F."/>
            <person name="Leversha M.A."/>
            <person name="Lloyd C."/>
            <person name="Lloyd D.M."/>
            <person name="Martyn I.D."/>
            <person name="Mashreghi-Mohammadi M."/>
            <person name="Matthews L.H."/>
            <person name="Mccann O.T."/>
            <person name="Mcclay J."/>
            <person name="Mclaren S."/>
            <person name="McMurray A.A."/>
            <person name="Milne S.A."/>
            <person name="Mortimore B.J."/>
            <person name="Odell C.N."/>
            <person name="Pavitt R."/>
            <person name="Pearce A.V."/>
            <person name="Pearson D."/>
            <person name="Phillimore B.J.C.T."/>
            <person name="Phillips S.H."/>
            <person name="Plumb R.W."/>
            <person name="Ramsay H."/>
            <person name="Ramsey Y."/>
            <person name="Rogers L."/>
            <person name="Ross M.T."/>
            <person name="Scott C.E."/>
            <person name="Sehra H.K."/>
            <person name="Skuce C.D."/>
            <person name="Smalley S."/>
            <person name="Smith M.L."/>
            <person name="Soderlund C."/>
            <person name="Spragon L."/>
            <person name="Steward C.A."/>
            <person name="Sulston J.E."/>
            <person name="Swann R.M."/>
            <person name="Vaudin M."/>
            <person name="Wall M."/>
            <person name="Wallis J.M."/>
            <person name="Whiteley M.N."/>
            <person name="Willey D.L."/>
            <person name="Williams L."/>
            <person name="Williams S.A."/>
            <person name="Williamson H."/>
            <person name="Wilmer T.E."/>
            <person name="Wilming L."/>
            <person name="Wright C.L."/>
            <person name="Hubbard T."/>
            <person name="Bentley D.R."/>
            <person name="Beck S."/>
            <person name="Rogers J."/>
            <person name="Shimizu N."/>
            <person name="Minoshima S."/>
            <person name="Kawasaki K."/>
            <person name="Sasaki T."/>
            <person name="Asakawa S."/>
            <person name="Kudoh J."/>
            <person name="Shintani A."/>
            <person name="Shibuya K."/>
            <person name="Yoshizaki Y."/>
            <person name="Aoki N."/>
            <person name="Mitsuyama S."/>
            <person name="Roe B.A."/>
            <person name="Chen F."/>
            <person name="Chu L."/>
            <person name="Crabtree J."/>
            <person name="Deschamps S."/>
            <person name="Do A."/>
            <person name="Do T."/>
            <person name="Dorman A."/>
            <person name="Fang F."/>
            <person name="Fu Y."/>
            <person name="Hu P."/>
            <person name="Hua A."/>
            <person name="Kenton S."/>
            <person name="Lai H."/>
            <person name="Lao H.I."/>
            <person name="Lewis J."/>
            <person name="Lewis S."/>
            <person name="Lin S.-P."/>
            <person name="Loh P."/>
            <person name="Malaj E."/>
            <person name="Nguyen T."/>
            <person name="Pan H."/>
            <person name="Phan S."/>
            <person name="Qi S."/>
            <person name="Qian Y."/>
            <person name="Ray L."/>
            <person name="Ren Q."/>
            <person name="Shaull S."/>
            <person name="Sloan D."/>
            <person name="Song L."/>
            <person name="Wang Q."/>
            <person name="Wang Y."/>
            <person name="Wang Z."/>
            <person name="White J."/>
            <person name="Willingham D."/>
            <person name="Wu H."/>
            <person name="Yao Z."/>
            <person name="Zhan M."/>
            <person name="Zhang G."/>
            <person name="Chissoe S."/>
            <person name="Murray J."/>
            <person name="Miller N."/>
            <person name="Minx P."/>
            <person name="Fulton R."/>
            <person name="Johnson D."/>
            <person name="Bemis G."/>
            <person name="Bentley D."/>
            <person name="Bradshaw H."/>
            <person name="Bourne S."/>
            <person name="Cordes M."/>
            <person name="Du Z."/>
            <person name="Fulton L."/>
            <person name="Goela D."/>
            <person name="Graves T."/>
            <person name="Hawkins J."/>
            <person name="Hinds K."/>
            <person name="Kemp K."/>
            <person name="Latreille P."/>
            <person name="Layman D."/>
            <person name="Ozersky P."/>
            <person name="Rohlfing T."/>
            <person name="Scheet P."/>
            <person name="Walker C."/>
            <person name="Wamsley A."/>
            <person name="Wohldmann P."/>
            <person name="Pepin K."/>
            <person name="Nelson J."/>
            <person name="Korf I."/>
            <person name="Bedell J.A."/>
            <person name="Hillier L.W."/>
            <person name="Mardis E."/>
            <person name="Waterston R."/>
            <person name="Wilson R."/>
            <person name="Emanuel B.S."/>
            <person name="Shaikh T."/>
            <person name="Kurahashi H."/>
            <person name="Saitta S."/>
            <person name="Budarf M.L."/>
            <person name="McDermid H.E."/>
            <person name="Johnson A."/>
            <person name="Wong A.C.C."/>
            <person name="Morrow B.E."/>
            <person name="Edelmann L."/>
            <person name="Kim U.J."/>
            <person name="Shizuya H."/>
            <person name="Simon M.I."/>
            <person name="Dumanski J.P."/>
            <person name="Peyrard M."/>
            <person name="Kedra D."/>
            <person name="Seroussi E."/>
            <person name="Fransson I."/>
            <person name="Tapia I."/>
            <person name="Bruder C.E."/>
            <person name="O'Brien K.P."/>
            <person name="Wilkinson P."/>
            <person name="Bodenteich A."/>
            <person name="Hartman K."/>
            <person name="Hu X."/>
            <person name="Khan A.S."/>
            <person name="Lane L."/>
            <person name="Tilahun Y."/>
            <person name="Wright H."/>
        </authorList>
    </citation>
    <scope>NUCLEOTIDE SEQUENCE [LARGE SCALE GENOMIC DNA]</scope>
</reference>
<reference key="5">
    <citation type="submission" date="2005-07" db="EMBL/GenBank/DDBJ databases">
        <authorList>
            <person name="Mural R.J."/>
            <person name="Istrail S."/>
            <person name="Sutton G.G."/>
            <person name="Florea L."/>
            <person name="Halpern A.L."/>
            <person name="Mobarry C.M."/>
            <person name="Lippert R."/>
            <person name="Walenz B."/>
            <person name="Shatkay H."/>
            <person name="Dew I."/>
            <person name="Miller J.R."/>
            <person name="Flanigan M.J."/>
            <person name="Edwards N.J."/>
            <person name="Bolanos R."/>
            <person name="Fasulo D."/>
            <person name="Halldorsson B.V."/>
            <person name="Hannenhalli S."/>
            <person name="Turner R."/>
            <person name="Yooseph S."/>
            <person name="Lu F."/>
            <person name="Nusskern D.R."/>
            <person name="Shue B.C."/>
            <person name="Zheng X.H."/>
            <person name="Zhong F."/>
            <person name="Delcher A.L."/>
            <person name="Huson D.H."/>
            <person name="Kravitz S.A."/>
            <person name="Mouchard L."/>
            <person name="Reinert K."/>
            <person name="Remington K.A."/>
            <person name="Clark A.G."/>
            <person name="Waterman M.S."/>
            <person name="Eichler E.E."/>
            <person name="Adams M.D."/>
            <person name="Hunkapiller M.W."/>
            <person name="Myers E.W."/>
            <person name="Venter J.C."/>
        </authorList>
    </citation>
    <scope>NUCLEOTIDE SEQUENCE [LARGE SCALE GENOMIC DNA]</scope>
</reference>
<reference key="6">
    <citation type="journal article" date="2004" name="Genome Res.">
        <title>The status, quality, and expansion of the NIH full-length cDNA project: the Mammalian Gene Collection (MGC).</title>
        <authorList>
            <consortium name="The MGC Project Team"/>
        </authorList>
    </citation>
    <scope>NUCLEOTIDE SEQUENCE [LARGE SCALE MRNA] (ISOFORM 1)</scope>
    <scope>VARIANT VAL-21</scope>
    <source>
        <tissue>Placenta</tissue>
    </source>
</reference>
<reference key="7">
    <citation type="journal article" date="2004" name="Protein Sci.">
        <title>Signal peptide prediction based on analysis of experimentally verified cleavage sites.</title>
        <authorList>
            <person name="Zhang Z."/>
            <person name="Henzel W.J."/>
        </authorList>
    </citation>
    <scope>PROTEIN SEQUENCE OF 47-61</scope>
</reference>
<protein>
    <recommendedName>
        <fullName>Complement C1q tumor necrosis factor-related protein 6</fullName>
    </recommendedName>
</protein>
<name>C1QT6_HUMAN</name>
<organism>
    <name type="scientific">Homo sapiens</name>
    <name type="common">Human</name>
    <dbReference type="NCBI Taxonomy" id="9606"/>
    <lineage>
        <taxon>Eukaryota</taxon>
        <taxon>Metazoa</taxon>
        <taxon>Chordata</taxon>
        <taxon>Craniata</taxon>
        <taxon>Vertebrata</taxon>
        <taxon>Euteleostomi</taxon>
        <taxon>Mammalia</taxon>
        <taxon>Eutheria</taxon>
        <taxon>Euarchontoglires</taxon>
        <taxon>Primates</taxon>
        <taxon>Haplorrhini</taxon>
        <taxon>Catarrhini</taxon>
        <taxon>Hominidae</taxon>
        <taxon>Homo</taxon>
    </lineage>
</organism>